<reference key="1">
    <citation type="journal article" date="2003" name="Proc. Natl. Acad. Sci. U.S.A.">
        <title>Complete genome sequence of Lactobacillus plantarum WCFS1.</title>
        <authorList>
            <person name="Kleerebezem M."/>
            <person name="Boekhorst J."/>
            <person name="van Kranenburg R."/>
            <person name="Molenaar D."/>
            <person name="Kuipers O.P."/>
            <person name="Leer R."/>
            <person name="Tarchini R."/>
            <person name="Peters S.A."/>
            <person name="Sandbrink H.M."/>
            <person name="Fiers M.W.E.J."/>
            <person name="Stiekema W."/>
            <person name="Klein Lankhorst R.M."/>
            <person name="Bron P.A."/>
            <person name="Hoffer S.M."/>
            <person name="Nierop Groot M.N."/>
            <person name="Kerkhoven R."/>
            <person name="De Vries M."/>
            <person name="Ursing B."/>
            <person name="De Vos W.M."/>
            <person name="Siezen R.J."/>
        </authorList>
    </citation>
    <scope>NUCLEOTIDE SEQUENCE [LARGE SCALE GENOMIC DNA]</scope>
    <source>
        <strain>ATCC BAA-793 / NCIMB 8826 / WCFS1</strain>
    </source>
</reference>
<reference key="2">
    <citation type="journal article" date="2012" name="J. Bacteriol.">
        <title>Complete resequencing and reannotation of the Lactobacillus plantarum WCFS1 genome.</title>
        <authorList>
            <person name="Siezen R.J."/>
            <person name="Francke C."/>
            <person name="Renckens B."/>
            <person name="Boekhorst J."/>
            <person name="Wels M."/>
            <person name="Kleerebezem M."/>
            <person name="van Hijum S.A."/>
        </authorList>
    </citation>
    <scope>NUCLEOTIDE SEQUENCE [LARGE SCALE GENOMIC DNA]</scope>
    <scope>GENOME REANNOTATION</scope>
    <source>
        <strain>ATCC BAA-793 / NCIMB 8826 / WCFS1</strain>
    </source>
</reference>
<name>PRSA2_LACPL</name>
<evidence type="ECO:0000250" key="1"/>
<evidence type="ECO:0000255" key="2"/>
<evidence type="ECO:0000305" key="3"/>
<feature type="signal peptide" evidence="2">
    <location>
        <begin position="1"/>
        <end position="20"/>
    </location>
</feature>
<feature type="chain" id="PRO_0000029308" description="Foldase protein PrsA 2">
    <location>
        <begin position="21"/>
        <end position="309"/>
    </location>
</feature>
<feature type="domain" description="PpiC">
    <location>
        <begin position="137"/>
        <end position="232"/>
    </location>
</feature>
<feature type="lipid moiety-binding region" description="N-palmitoyl cysteine" evidence="2">
    <location>
        <position position="21"/>
    </location>
</feature>
<feature type="lipid moiety-binding region" description="S-diacylglycerol cysteine" evidence="2">
    <location>
        <position position="21"/>
    </location>
</feature>
<protein>
    <recommendedName>
        <fullName>Foldase protein PrsA 2</fullName>
        <ecNumber>5.2.1.8</ecNumber>
    </recommendedName>
</protein>
<comment type="function">
    <text evidence="1">Plays a major role in protein secretion by helping the post-translocational extracellular folding of several secreted proteins.</text>
</comment>
<comment type="catalytic activity">
    <reaction>
        <text>[protein]-peptidylproline (omega=180) = [protein]-peptidylproline (omega=0)</text>
        <dbReference type="Rhea" id="RHEA:16237"/>
        <dbReference type="Rhea" id="RHEA-COMP:10747"/>
        <dbReference type="Rhea" id="RHEA-COMP:10748"/>
        <dbReference type="ChEBI" id="CHEBI:83833"/>
        <dbReference type="ChEBI" id="CHEBI:83834"/>
        <dbReference type="EC" id="5.2.1.8"/>
    </reaction>
</comment>
<comment type="subcellular location">
    <subcellularLocation>
        <location evidence="3">Cell membrane</location>
        <topology evidence="3">Lipid-anchor</topology>
    </subcellularLocation>
</comment>
<comment type="similarity">
    <text evidence="3">Belongs to the PrsA family.</text>
</comment>
<proteinExistence type="inferred from homology"/>
<sequence length="309" mass="34308">MKYRLIGVGASLVVAVMLTGCQAKATTLVKSDAGQVTQAEVFKQIENQATTQQAVQELTLNKVLNQRYHVSQAEVTAKLKAFKRQAGANYHMILERNHVTEPRLKSQIKANLLMEKAVSAKYPVTKAQLKKARAAYMPMTTVQHIATTNEKQAQKIIAELNAGASFDSQVRKYQNNRQAHTTAGKLAQFDSYNQTLAPAIVQATAKLRVGHYVTKPVKTVMATADTKDKPTYEIINVVSRRSKTAAVTDDSGKQIDVTNYLREKIQQQRMMDKQTQVATIRSVFKAAHVKVVDAHFAPAFNDYLTTQNS</sequence>
<gene>
    <name type="primary">prsA2</name>
    <name type="synonym">prtM2</name>
    <name type="ordered locus">lp_3193</name>
</gene>
<keyword id="KW-1003">Cell membrane</keyword>
<keyword id="KW-0413">Isomerase</keyword>
<keyword id="KW-0449">Lipoprotein</keyword>
<keyword id="KW-0472">Membrane</keyword>
<keyword id="KW-0564">Palmitate</keyword>
<keyword id="KW-1185">Reference proteome</keyword>
<keyword id="KW-0697">Rotamase</keyword>
<keyword id="KW-0732">Signal</keyword>
<accession>Q88T16</accession>
<accession>F9UTA2</accession>
<dbReference type="EC" id="5.2.1.8"/>
<dbReference type="EMBL" id="AL935263">
    <property type="protein sequence ID" value="CCC80220.1"/>
    <property type="molecule type" value="Genomic_DNA"/>
</dbReference>
<dbReference type="RefSeq" id="WP_011102074.1">
    <property type="nucleotide sequence ID" value="NC_004567.2"/>
</dbReference>
<dbReference type="RefSeq" id="YP_004890734.1">
    <property type="nucleotide sequence ID" value="NC_004567.2"/>
</dbReference>
<dbReference type="SMR" id="Q88T16"/>
<dbReference type="STRING" id="220668.lp_3193"/>
<dbReference type="DNASU" id="1061958"/>
<dbReference type="EnsemblBacteria" id="CCC80220">
    <property type="protein sequence ID" value="CCC80220"/>
    <property type="gene ID" value="lp_3193"/>
</dbReference>
<dbReference type="KEGG" id="lpl:lp_3193"/>
<dbReference type="PATRIC" id="fig|220668.9.peg.2668"/>
<dbReference type="eggNOG" id="COG0760">
    <property type="taxonomic scope" value="Bacteria"/>
</dbReference>
<dbReference type="HOGENOM" id="CLU_034646_6_1_9"/>
<dbReference type="OrthoDB" id="14196at2"/>
<dbReference type="PhylomeDB" id="Q88T16"/>
<dbReference type="Proteomes" id="UP000000432">
    <property type="component" value="Chromosome"/>
</dbReference>
<dbReference type="GO" id="GO:0005886">
    <property type="term" value="C:plasma membrane"/>
    <property type="evidence" value="ECO:0007669"/>
    <property type="project" value="UniProtKB-SubCell"/>
</dbReference>
<dbReference type="GO" id="GO:0003755">
    <property type="term" value="F:peptidyl-prolyl cis-trans isomerase activity"/>
    <property type="evidence" value="ECO:0007669"/>
    <property type="project" value="UniProtKB-UniRule"/>
</dbReference>
<dbReference type="GO" id="GO:0006457">
    <property type="term" value="P:protein folding"/>
    <property type="evidence" value="ECO:0007669"/>
    <property type="project" value="UniProtKB-UniRule"/>
</dbReference>
<dbReference type="Gene3D" id="3.10.50.40">
    <property type="match status" value="1"/>
</dbReference>
<dbReference type="HAMAP" id="MF_01145">
    <property type="entry name" value="Foldase_PrsA"/>
    <property type="match status" value="1"/>
</dbReference>
<dbReference type="InterPro" id="IPR023059">
    <property type="entry name" value="Foldase_PrsA"/>
</dbReference>
<dbReference type="InterPro" id="IPR046357">
    <property type="entry name" value="PPIase_dom_sf"/>
</dbReference>
<dbReference type="InterPro" id="IPR000297">
    <property type="entry name" value="PPIase_PpiC"/>
</dbReference>
<dbReference type="InterPro" id="IPR050245">
    <property type="entry name" value="PrsA_foldase"/>
</dbReference>
<dbReference type="InterPro" id="IPR027304">
    <property type="entry name" value="Trigger_fact/SurA_dom_sf"/>
</dbReference>
<dbReference type="PANTHER" id="PTHR47245:SF1">
    <property type="entry name" value="FOLDASE PROTEIN PRSA"/>
    <property type="match status" value="1"/>
</dbReference>
<dbReference type="PANTHER" id="PTHR47245">
    <property type="entry name" value="PEPTIDYLPROLYL ISOMERASE"/>
    <property type="match status" value="1"/>
</dbReference>
<dbReference type="SUPFAM" id="SSF54534">
    <property type="entry name" value="FKBP-like"/>
    <property type="match status" value="1"/>
</dbReference>
<dbReference type="SUPFAM" id="SSF109998">
    <property type="entry name" value="Triger factor/SurA peptide-binding domain-like"/>
    <property type="match status" value="1"/>
</dbReference>
<dbReference type="PROSITE" id="PS50198">
    <property type="entry name" value="PPIC_PPIASE_2"/>
    <property type="match status" value="1"/>
</dbReference>
<dbReference type="PROSITE" id="PS51257">
    <property type="entry name" value="PROKAR_LIPOPROTEIN"/>
    <property type="match status" value="1"/>
</dbReference>
<organism>
    <name type="scientific">Lactiplantibacillus plantarum (strain ATCC BAA-793 / NCIMB 8826 / WCFS1)</name>
    <name type="common">Lactobacillus plantarum</name>
    <dbReference type="NCBI Taxonomy" id="220668"/>
    <lineage>
        <taxon>Bacteria</taxon>
        <taxon>Bacillati</taxon>
        <taxon>Bacillota</taxon>
        <taxon>Bacilli</taxon>
        <taxon>Lactobacillales</taxon>
        <taxon>Lactobacillaceae</taxon>
        <taxon>Lactiplantibacillus</taxon>
    </lineage>
</organism>